<protein>
    <recommendedName>
        <fullName evidence="1">3-deoxy-manno-octulosonate cytidylyltransferase</fullName>
        <ecNumber evidence="1">2.7.7.38</ecNumber>
    </recommendedName>
    <alternativeName>
        <fullName evidence="1">CMP-2-keto-3-deoxyoctulosonic acid synthase</fullName>
        <shortName evidence="1">CKS</shortName>
        <shortName evidence="1">CMP-KDO synthase</shortName>
    </alternativeName>
</protein>
<dbReference type="EC" id="2.7.7.38" evidence="1"/>
<dbReference type="EMBL" id="AE006914">
    <property type="protein sequence ID" value="AAL03062.1"/>
    <property type="molecule type" value="Genomic_DNA"/>
</dbReference>
<dbReference type="PIR" id="D97765">
    <property type="entry name" value="D97765"/>
</dbReference>
<dbReference type="RefSeq" id="WP_010977163.1">
    <property type="nucleotide sequence ID" value="NC_003103.1"/>
</dbReference>
<dbReference type="SMR" id="Q92I96"/>
<dbReference type="GeneID" id="927639"/>
<dbReference type="KEGG" id="rco:RC0524"/>
<dbReference type="PATRIC" id="fig|272944.4.peg.599"/>
<dbReference type="HOGENOM" id="CLU_065038_0_1_5"/>
<dbReference type="BRENDA" id="2.7.7.38">
    <property type="organism ID" value="5446"/>
</dbReference>
<dbReference type="UniPathway" id="UPA00030"/>
<dbReference type="UniPathway" id="UPA00358">
    <property type="reaction ID" value="UER00476"/>
</dbReference>
<dbReference type="Proteomes" id="UP000000816">
    <property type="component" value="Chromosome"/>
</dbReference>
<dbReference type="GO" id="GO:0005829">
    <property type="term" value="C:cytosol"/>
    <property type="evidence" value="ECO:0007669"/>
    <property type="project" value="TreeGrafter"/>
</dbReference>
<dbReference type="GO" id="GO:0008690">
    <property type="term" value="F:3-deoxy-manno-octulosonate cytidylyltransferase activity"/>
    <property type="evidence" value="ECO:0007669"/>
    <property type="project" value="UniProtKB-UniRule"/>
</dbReference>
<dbReference type="GO" id="GO:0033468">
    <property type="term" value="P:CMP-keto-3-deoxy-D-manno-octulosonic acid biosynthetic process"/>
    <property type="evidence" value="ECO:0007669"/>
    <property type="project" value="UniProtKB-UniRule"/>
</dbReference>
<dbReference type="GO" id="GO:0009103">
    <property type="term" value="P:lipopolysaccharide biosynthetic process"/>
    <property type="evidence" value="ECO:0007669"/>
    <property type="project" value="UniProtKB-UniRule"/>
</dbReference>
<dbReference type="CDD" id="cd02517">
    <property type="entry name" value="CMP-KDO-Synthetase"/>
    <property type="match status" value="1"/>
</dbReference>
<dbReference type="Gene3D" id="3.90.550.10">
    <property type="entry name" value="Spore Coat Polysaccharide Biosynthesis Protein SpsA, Chain A"/>
    <property type="match status" value="1"/>
</dbReference>
<dbReference type="HAMAP" id="MF_00057">
    <property type="entry name" value="KdsB"/>
    <property type="match status" value="1"/>
</dbReference>
<dbReference type="InterPro" id="IPR003329">
    <property type="entry name" value="Cytidylyl_trans"/>
</dbReference>
<dbReference type="InterPro" id="IPR004528">
    <property type="entry name" value="KdsB"/>
</dbReference>
<dbReference type="InterPro" id="IPR029044">
    <property type="entry name" value="Nucleotide-diphossugar_trans"/>
</dbReference>
<dbReference type="NCBIfam" id="TIGR00466">
    <property type="entry name" value="kdsB"/>
    <property type="match status" value="1"/>
</dbReference>
<dbReference type="NCBIfam" id="NF003948">
    <property type="entry name" value="PRK05450.1-1"/>
    <property type="match status" value="1"/>
</dbReference>
<dbReference type="NCBIfam" id="NF003952">
    <property type="entry name" value="PRK05450.1-5"/>
    <property type="match status" value="1"/>
</dbReference>
<dbReference type="PANTHER" id="PTHR42866">
    <property type="entry name" value="3-DEOXY-MANNO-OCTULOSONATE CYTIDYLYLTRANSFERASE"/>
    <property type="match status" value="1"/>
</dbReference>
<dbReference type="PANTHER" id="PTHR42866:SF2">
    <property type="entry name" value="3-DEOXY-MANNO-OCTULOSONATE CYTIDYLYLTRANSFERASE, MITOCHONDRIAL"/>
    <property type="match status" value="1"/>
</dbReference>
<dbReference type="Pfam" id="PF02348">
    <property type="entry name" value="CTP_transf_3"/>
    <property type="match status" value="1"/>
</dbReference>
<dbReference type="SUPFAM" id="SSF53448">
    <property type="entry name" value="Nucleotide-diphospho-sugar transferases"/>
    <property type="match status" value="1"/>
</dbReference>
<proteinExistence type="inferred from homology"/>
<name>KDSB_RICCN</name>
<accession>Q92I96</accession>
<reference key="1">
    <citation type="journal article" date="2001" name="Science">
        <title>Mechanisms of evolution in Rickettsia conorii and R. prowazekii.</title>
        <authorList>
            <person name="Ogata H."/>
            <person name="Audic S."/>
            <person name="Renesto-Audiffren P."/>
            <person name="Fournier P.-E."/>
            <person name="Barbe V."/>
            <person name="Samson D."/>
            <person name="Roux V."/>
            <person name="Cossart P."/>
            <person name="Weissenbach J."/>
            <person name="Claverie J.-M."/>
            <person name="Raoult D."/>
        </authorList>
    </citation>
    <scope>NUCLEOTIDE SEQUENCE [LARGE SCALE GENOMIC DNA]</scope>
    <source>
        <strain>ATCC VR-613 / Malish 7</strain>
    </source>
</reference>
<feature type="chain" id="PRO_0000188513" description="3-deoxy-manno-octulosonate cytidylyltransferase">
    <location>
        <begin position="1"/>
        <end position="246"/>
    </location>
</feature>
<evidence type="ECO:0000255" key="1">
    <source>
        <dbReference type="HAMAP-Rule" id="MF_00057"/>
    </source>
</evidence>
<comment type="function">
    <text evidence="1">Activates KDO (a required 8-carbon sugar) for incorporation into bacterial lipopolysaccharide in Gram-negative bacteria.</text>
</comment>
<comment type="catalytic activity">
    <reaction evidence="1">
        <text>3-deoxy-alpha-D-manno-oct-2-ulosonate + CTP = CMP-3-deoxy-beta-D-manno-octulosonate + diphosphate</text>
        <dbReference type="Rhea" id="RHEA:23448"/>
        <dbReference type="ChEBI" id="CHEBI:33019"/>
        <dbReference type="ChEBI" id="CHEBI:37563"/>
        <dbReference type="ChEBI" id="CHEBI:85986"/>
        <dbReference type="ChEBI" id="CHEBI:85987"/>
        <dbReference type="EC" id="2.7.7.38"/>
    </reaction>
</comment>
<comment type="pathway">
    <text evidence="1">Nucleotide-sugar biosynthesis; CMP-3-deoxy-D-manno-octulosonate biosynthesis; CMP-3-deoxy-D-manno-octulosonate from 3-deoxy-D-manno-octulosonate and CTP: step 1/1.</text>
</comment>
<comment type="pathway">
    <text evidence="1">Bacterial outer membrane biogenesis; lipopolysaccharide biosynthesis.</text>
</comment>
<comment type="subcellular location">
    <subcellularLocation>
        <location evidence="1">Cytoplasm</location>
    </subcellularLocation>
</comment>
<comment type="similarity">
    <text evidence="1">Belongs to the KdsB family.</text>
</comment>
<gene>
    <name evidence="1" type="primary">kdsB</name>
    <name type="ordered locus">RC0524</name>
</gene>
<keyword id="KW-0963">Cytoplasm</keyword>
<keyword id="KW-0448">Lipopolysaccharide biosynthesis</keyword>
<keyword id="KW-0548">Nucleotidyltransferase</keyword>
<keyword id="KW-0808">Transferase</keyword>
<organism>
    <name type="scientific">Rickettsia conorii (strain ATCC VR-613 / Malish 7)</name>
    <dbReference type="NCBI Taxonomy" id="272944"/>
    <lineage>
        <taxon>Bacteria</taxon>
        <taxon>Pseudomonadati</taxon>
        <taxon>Pseudomonadota</taxon>
        <taxon>Alphaproteobacteria</taxon>
        <taxon>Rickettsiales</taxon>
        <taxon>Rickettsiaceae</taxon>
        <taxon>Rickettsieae</taxon>
        <taxon>Rickettsia</taxon>
        <taxon>spotted fever group</taxon>
    </lineage>
</organism>
<sequence>MRHQDVAIIIPSRLSSTRLKQKPLQLIGSITLIERVFKQVNQAGLEHTYVATDSEEIASVITKVGGKVIFTDSAIPTGTDRTYEAFKLIPNNQNINYIVNVQGDMPFIEPSSILKIIEYLKNSKYDVVTPIVKVDRESVKASSNVTVAVDSAGTALYFSRSLIPNGAEEFLYHVGMYGFRKNALEKFVSLKPTFLEKTERLEQLRVLENGMTIGTCLVENVPISVDTEEDLKKAVKFYENISKLGL</sequence>